<keyword id="KW-0028">Amino-acid biosynthesis</keyword>
<keyword id="KW-0032">Aminotransferase</keyword>
<keyword id="KW-0368">Histidine biosynthesis</keyword>
<keyword id="KW-0663">Pyridoxal phosphate</keyword>
<keyword id="KW-1185">Reference proteome</keyword>
<keyword id="KW-0808">Transferase</keyword>
<name>HIS8_STRMU</name>
<reference key="1">
    <citation type="journal article" date="2002" name="Proc. Natl. Acad. Sci. U.S.A.">
        <title>Genome sequence of Streptococcus mutans UA159, a cariogenic dental pathogen.</title>
        <authorList>
            <person name="Ajdic D.J."/>
            <person name="McShan W.M."/>
            <person name="McLaughlin R.E."/>
            <person name="Savic G."/>
            <person name="Chang J."/>
            <person name="Carson M.B."/>
            <person name="Primeaux C."/>
            <person name="Tian R."/>
            <person name="Kenton S."/>
            <person name="Jia H.G."/>
            <person name="Lin S.P."/>
            <person name="Qian Y."/>
            <person name="Li S."/>
            <person name="Zhu H."/>
            <person name="Najar F.Z."/>
            <person name="Lai H."/>
            <person name="White J."/>
            <person name="Roe B.A."/>
            <person name="Ferretti J.J."/>
        </authorList>
    </citation>
    <scope>NUCLEOTIDE SEQUENCE [LARGE SCALE GENOMIC DNA]</scope>
    <source>
        <strain>ATCC 700610 / UA159</strain>
    </source>
</reference>
<organism>
    <name type="scientific">Streptococcus mutans serotype c (strain ATCC 700610 / UA159)</name>
    <dbReference type="NCBI Taxonomy" id="210007"/>
    <lineage>
        <taxon>Bacteria</taxon>
        <taxon>Bacillati</taxon>
        <taxon>Bacillota</taxon>
        <taxon>Bacilli</taxon>
        <taxon>Lactobacillales</taxon>
        <taxon>Streptococcaceae</taxon>
        <taxon>Streptococcus</taxon>
    </lineage>
</organism>
<protein>
    <recommendedName>
        <fullName evidence="1">Histidinol-phosphate aminotransferase</fullName>
        <ecNumber evidence="1">2.6.1.9</ecNumber>
    </recommendedName>
    <alternativeName>
        <fullName evidence="1">Imidazole acetol-phosphate transaminase</fullName>
    </alternativeName>
</protein>
<feature type="chain" id="PRO_0000153461" description="Histidinol-phosphate aminotransferase">
    <location>
        <begin position="1"/>
        <end position="349"/>
    </location>
</feature>
<feature type="modified residue" description="N6-(pyridoxal phosphate)lysine" evidence="1">
    <location>
        <position position="206"/>
    </location>
</feature>
<accession>Q8DTQ4</accession>
<sequence length="349" mass="39443">MIRGLRQIEPYVAGVQPAERKMIKLNTNENAYGASPKVREALANFDVDNLRKYSTLEQADLRAALANNLKVKPEQLMIANGSDDVLSIAFLAFFNNDEPVLFPDLTYGFYKVWADLYRVNYHEIPLAEDFTINTEDYLADNGGIILTNPNAPTGIYKPLNEIEKLLKANQDTVVIIDEAYISFGGQSALSLLNKYNNLVITRTFSKDAALAGLRVGYAIANEPLIAVMNAVKHSINPYSVDLLAERLATAAVEDWSYYQENAKKIQKTRAWFSEQLVKQGFDVLPSQANFVLTKPHDLATAKLFEELEARKIYVRYFPKVERIKDYLRISMGTQEEMEEVVKAIEEIRG</sequence>
<comment type="catalytic activity">
    <reaction evidence="1">
        <text>L-histidinol phosphate + 2-oxoglutarate = 3-(imidazol-4-yl)-2-oxopropyl phosphate + L-glutamate</text>
        <dbReference type="Rhea" id="RHEA:23744"/>
        <dbReference type="ChEBI" id="CHEBI:16810"/>
        <dbReference type="ChEBI" id="CHEBI:29985"/>
        <dbReference type="ChEBI" id="CHEBI:57766"/>
        <dbReference type="ChEBI" id="CHEBI:57980"/>
        <dbReference type="EC" id="2.6.1.9"/>
    </reaction>
</comment>
<comment type="cofactor">
    <cofactor evidence="1">
        <name>pyridoxal 5'-phosphate</name>
        <dbReference type="ChEBI" id="CHEBI:597326"/>
    </cofactor>
</comment>
<comment type="pathway">
    <text evidence="1">Amino-acid biosynthesis; L-histidine biosynthesis; L-histidine from 5-phospho-alpha-D-ribose 1-diphosphate: step 7/9.</text>
</comment>
<comment type="subunit">
    <text evidence="1">Homodimer.</text>
</comment>
<comment type="similarity">
    <text evidence="1">Belongs to the class-II pyridoxal-phosphate-dependent aminotransferase family. Histidinol-phosphate aminotransferase subfamily.</text>
</comment>
<evidence type="ECO:0000255" key="1">
    <source>
        <dbReference type="HAMAP-Rule" id="MF_01023"/>
    </source>
</evidence>
<proteinExistence type="inferred from homology"/>
<gene>
    <name evidence="1" type="primary">hisC</name>
    <name type="ordered locus">SMU_1273</name>
</gene>
<dbReference type="EC" id="2.6.1.9" evidence="1"/>
<dbReference type="EMBL" id="AE014133">
    <property type="protein sequence ID" value="AAN58955.1"/>
    <property type="molecule type" value="Genomic_DNA"/>
</dbReference>
<dbReference type="RefSeq" id="NP_721649.1">
    <property type="nucleotide sequence ID" value="NC_004350.2"/>
</dbReference>
<dbReference type="RefSeq" id="WP_002263171.1">
    <property type="nucleotide sequence ID" value="NC_004350.2"/>
</dbReference>
<dbReference type="SMR" id="Q8DTQ4"/>
<dbReference type="STRING" id="210007.SMU_1273"/>
<dbReference type="DNASU" id="1028557"/>
<dbReference type="KEGG" id="smu:SMU_1273"/>
<dbReference type="PATRIC" id="fig|210007.7.peg.1142"/>
<dbReference type="eggNOG" id="COG0079">
    <property type="taxonomic scope" value="Bacteria"/>
</dbReference>
<dbReference type="HOGENOM" id="CLU_017584_3_0_9"/>
<dbReference type="OrthoDB" id="9813612at2"/>
<dbReference type="PhylomeDB" id="Q8DTQ4"/>
<dbReference type="UniPathway" id="UPA00031">
    <property type="reaction ID" value="UER00012"/>
</dbReference>
<dbReference type="Proteomes" id="UP000002512">
    <property type="component" value="Chromosome"/>
</dbReference>
<dbReference type="GO" id="GO:0004400">
    <property type="term" value="F:histidinol-phosphate transaminase activity"/>
    <property type="evidence" value="ECO:0007669"/>
    <property type="project" value="UniProtKB-UniRule"/>
</dbReference>
<dbReference type="GO" id="GO:0030170">
    <property type="term" value="F:pyridoxal phosphate binding"/>
    <property type="evidence" value="ECO:0007669"/>
    <property type="project" value="InterPro"/>
</dbReference>
<dbReference type="GO" id="GO:0000105">
    <property type="term" value="P:L-histidine biosynthetic process"/>
    <property type="evidence" value="ECO:0007669"/>
    <property type="project" value="UniProtKB-UniRule"/>
</dbReference>
<dbReference type="CDD" id="cd00609">
    <property type="entry name" value="AAT_like"/>
    <property type="match status" value="1"/>
</dbReference>
<dbReference type="Gene3D" id="3.90.1150.10">
    <property type="entry name" value="Aspartate Aminotransferase, domain 1"/>
    <property type="match status" value="1"/>
</dbReference>
<dbReference type="Gene3D" id="3.40.640.10">
    <property type="entry name" value="Type I PLP-dependent aspartate aminotransferase-like (Major domain)"/>
    <property type="match status" value="1"/>
</dbReference>
<dbReference type="HAMAP" id="MF_01023">
    <property type="entry name" value="HisC_aminotrans_2"/>
    <property type="match status" value="1"/>
</dbReference>
<dbReference type="InterPro" id="IPR004839">
    <property type="entry name" value="Aminotransferase_I/II_large"/>
</dbReference>
<dbReference type="InterPro" id="IPR005861">
    <property type="entry name" value="HisP_aminotrans"/>
</dbReference>
<dbReference type="InterPro" id="IPR050106">
    <property type="entry name" value="HistidinolP_aminotransfase"/>
</dbReference>
<dbReference type="InterPro" id="IPR015424">
    <property type="entry name" value="PyrdxlP-dep_Trfase"/>
</dbReference>
<dbReference type="InterPro" id="IPR015421">
    <property type="entry name" value="PyrdxlP-dep_Trfase_major"/>
</dbReference>
<dbReference type="InterPro" id="IPR015422">
    <property type="entry name" value="PyrdxlP-dep_Trfase_small"/>
</dbReference>
<dbReference type="NCBIfam" id="TIGR01141">
    <property type="entry name" value="hisC"/>
    <property type="match status" value="1"/>
</dbReference>
<dbReference type="PANTHER" id="PTHR43643:SF3">
    <property type="entry name" value="HISTIDINOL-PHOSPHATE AMINOTRANSFERASE"/>
    <property type="match status" value="1"/>
</dbReference>
<dbReference type="PANTHER" id="PTHR43643">
    <property type="entry name" value="HISTIDINOL-PHOSPHATE AMINOTRANSFERASE 2"/>
    <property type="match status" value="1"/>
</dbReference>
<dbReference type="Pfam" id="PF00155">
    <property type="entry name" value="Aminotran_1_2"/>
    <property type="match status" value="1"/>
</dbReference>
<dbReference type="SUPFAM" id="SSF53383">
    <property type="entry name" value="PLP-dependent transferases"/>
    <property type="match status" value="1"/>
</dbReference>